<comment type="function">
    <text>Disease resistance protein. Resistance proteins guard the plant against pathogens that contain an appropriate avirulence protein via a direct or indirect interaction with this avirulence protein. That triggers a defense system which restricts the pathogen growth.</text>
</comment>
<comment type="induction">
    <text>Constitutively expressed.</text>
</comment>
<comment type="miscellaneous">
    <text>Belongs to a four-gene family located at the same locus. Although the four genes are expressed in the resistant haplotype, only RGA2 confers the resistance to P.infestans. In the susceptible haplotype, RGA1 and RGA3 are likely to be pseudogenes created by deletions and mutations, while RGA2 also contains several modifications.</text>
</comment>
<comment type="similarity">
    <text evidence="2">Belongs to the disease resistance NB-LRR family.</text>
</comment>
<comment type="sequence caution" evidence="2">
    <conflict type="erroneous gene model prediction">
        <sequence resource="EMBL-CDS" id="AAP45185"/>
    </conflict>
</comment>
<evidence type="ECO:0000255" key="1"/>
<evidence type="ECO:0000305" key="2"/>
<reference key="1">
    <citation type="journal article" date="2003" name="Proc. Natl. Acad. Sci. U.S.A.">
        <title>Gene RB cloned from Solanum bulbocastanum confers broad spectrum resistance to potato late blight.</title>
        <authorList>
            <person name="Song J."/>
            <person name="Bradeen J.M."/>
            <person name="Naess S.K."/>
            <person name="Raasch J.A."/>
            <person name="Wielgus S.M."/>
            <person name="Haberlach G.T."/>
            <person name="Liu J."/>
            <person name="Kuang H."/>
            <person name="Austin-Phillips S."/>
            <person name="Buell C.R."/>
            <person name="Helgeson J.P."/>
            <person name="Jiang J."/>
        </authorList>
    </citation>
    <scope>NUCLEOTIDE SEQUENCE [GENOMIC DNA]</scope>
    <scope>VARIANTS</scope>
</reference>
<reference key="2">
    <citation type="journal article" date="2003" name="Plant J.">
        <title>An ancient R gene from the wild potato species Solanum bulbocastanum confers broad-spectrum resistance to Phytophthora infestans in cultivated potato and tomato.</title>
        <authorList>
            <person name="van der Vossen E."/>
            <person name="Sikkema A."/>
            <person name="Hekkert Bt B.L."/>
            <person name="Gros J."/>
            <person name="Stevens P."/>
            <person name="Muskens M."/>
            <person name="Wouters D."/>
            <person name="Pereira A."/>
            <person name="Stiekema W."/>
            <person name="Allefs S."/>
        </authorList>
    </citation>
    <scope>NUCLEOTIDE SEQUENCE [GENOMIC DNA]</scope>
</reference>
<feature type="chain" id="PRO_0000212777" description="Putative disease resistance protein RGA1">
    <location>
        <begin position="1"/>
        <end position="979"/>
    </location>
</feature>
<feature type="domain" description="NB-ARC">
    <location>
        <begin position="143"/>
        <end position="437"/>
    </location>
</feature>
<feature type="repeat" description="LRR 1">
    <location>
        <begin position="524"/>
        <end position="547"/>
    </location>
</feature>
<feature type="repeat" description="LRR 2">
    <location>
        <begin position="549"/>
        <end position="570"/>
    </location>
</feature>
<feature type="repeat" description="LRR 3">
    <location>
        <begin position="571"/>
        <end position="594"/>
    </location>
</feature>
<feature type="repeat" description="LRR 4">
    <location>
        <begin position="595"/>
        <end position="619"/>
    </location>
</feature>
<feature type="repeat" description="LRR 5">
    <location>
        <begin position="637"/>
        <end position="661"/>
    </location>
</feature>
<feature type="repeat" description="LRR 6">
    <location>
        <begin position="748"/>
        <end position="773"/>
    </location>
</feature>
<feature type="repeat" description="LRR 7">
    <location>
        <begin position="823"/>
        <end position="841"/>
    </location>
</feature>
<feature type="repeat" description="LRR 8">
    <location>
        <begin position="842"/>
        <end position="866"/>
    </location>
</feature>
<feature type="repeat" description="LRR 9">
    <location>
        <begin position="868"/>
        <end position="890"/>
    </location>
</feature>
<feature type="repeat" description="LRR 10">
    <location>
        <begin position="891"/>
        <end position="915"/>
    </location>
</feature>
<feature type="repeat" description="LRR 11">
    <location>
        <begin position="917"/>
        <end position="939"/>
    </location>
</feature>
<feature type="repeat" description="LRR 12">
    <location>
        <begin position="940"/>
        <end position="965"/>
    </location>
</feature>
<feature type="binding site" evidence="1">
    <location>
        <begin position="182"/>
        <end position="189"/>
    </location>
    <ligand>
        <name>ATP</name>
        <dbReference type="ChEBI" id="CHEBI:30616"/>
    </ligand>
</feature>
<feature type="sequence variant" description="In susceptible haplotype.">
    <original>Q</original>
    <variation>L</variation>
    <location>
        <position position="88"/>
    </location>
</feature>
<feature type="sequence variant" description="In susceptible haplotype.">
    <original>P</original>
    <variation>S</variation>
    <location>
        <position position="149"/>
    </location>
</feature>
<feature type="sequence variant" description="In susceptible haplotype.">
    <original>I</original>
    <variation>T</variation>
    <location>
        <position position="166"/>
    </location>
</feature>
<feature type="sequence variant" description="In susceptible haplotype.">
    <original>F</original>
    <variation>V</variation>
    <location>
        <position position="559"/>
    </location>
</feature>
<feature type="sequence variant" description="In susceptible haplotype.">
    <original>N</original>
    <variation>S</variation>
    <location>
        <position position="563"/>
    </location>
</feature>
<feature type="sequence variant" description="In susceptible haplotype.">
    <original>K</original>
    <variation>R</variation>
    <location>
        <position position="566"/>
    </location>
</feature>
<feature type="sequence variant" description="In susceptible haplotype.">
    <original>SKLGSLRNLLLDGCSLTSTPPRIGLLTCLKSLSCFVIGKRKGH</original>
    <variation>ISKLLCYWQEKGY</variation>
    <location>
        <begin position="593"/>
        <end position="635"/>
    </location>
</feature>
<feature type="sequence variant" description="In susceptible haplotype.">
    <original>R</original>
    <variation>L</variation>
    <location>
        <position position="715"/>
    </location>
</feature>
<feature type="sequence variant" description="In susceptible haplotype.">
    <original>D</original>
    <variation>E</variation>
    <location>
        <position position="762"/>
    </location>
</feature>
<feature type="sequence variant" description="In susceptible haplotype.">
    <location>
        <begin position="770"/>
        <end position="795"/>
    </location>
</feature>
<feature type="sequence variant" description="In susceptible haplotype.">
    <original>A</original>
    <variation>S</variation>
    <location>
        <position position="970"/>
    </location>
</feature>
<feature type="sequence conflict" description="In Ref. 1; AAP45185 and 2; AAR29071." evidence="2" ref="1 2">
    <original>K</original>
    <variation>N</variation>
    <location>
        <position position="125"/>
    </location>
</feature>
<feature type="sequence conflict" description="In Ref. 2; AAR29071." evidence="2" ref="2">
    <original>TA</original>
    <variation>NV</variation>
    <location>
        <begin position="168"/>
        <end position="169"/>
    </location>
</feature>
<feature type="sequence conflict" description="In Ref. 1; AAP45185 and 2; AAR29071." evidence="2" ref="1 2">
    <original>I</original>
    <variation>V</variation>
    <location>
        <position position="213"/>
    </location>
</feature>
<feature type="sequence conflict" description="In Ref. 2; AAR29071." evidence="2" ref="2">
    <original>N</original>
    <variation>D</variation>
    <location>
        <position position="218"/>
    </location>
</feature>
<feature type="sequence conflict" description="In Ref. 1; AAP45185 and 2; AAR29071." evidence="2" ref="1 2">
    <original>M</original>
    <variation>V</variation>
    <location>
        <position position="336"/>
    </location>
</feature>
<feature type="sequence conflict" description="In Ref. 2; AAR29071." evidence="2" ref="2">
    <original>K</original>
    <variation>R</variation>
    <location>
        <position position="570"/>
    </location>
</feature>
<feature type="sequence conflict" description="In Ref. 2; AAR29071." evidence="2" ref="2">
    <original>H</original>
    <variation>Y</variation>
    <location>
        <position position="635"/>
    </location>
</feature>
<feature type="sequence conflict" description="In Ref. 2; AAR29071." evidence="2" ref="2">
    <original>T</original>
    <variation>S</variation>
    <location>
        <position position="661"/>
    </location>
</feature>
<feature type="sequence conflict" description="In Ref. 1; AAP45185 and 2; AAR29071." evidence="2" ref="1 2">
    <original>M</original>
    <variation>K</variation>
    <location>
        <position position="795"/>
    </location>
</feature>
<feature type="sequence conflict" description="In Ref. 1; AAP45185 and 2; AAR29071." evidence="2" ref="1 2">
    <original>V</original>
    <variation>A</variation>
    <location>
        <position position="830"/>
    </location>
</feature>
<feature type="sequence conflict" description="In Ref. 1; AAP45185 and 2; AAR29071." evidence="2" ref="1 2">
    <original>D</original>
    <variation>N</variation>
    <location>
        <position position="852"/>
    </location>
</feature>
<feature type="sequence conflict" description="In Ref. 1; AAP45185 and 2; AAR29071." evidence="2" ref="1 2">
    <original>K</original>
    <variation>N</variation>
    <location>
        <position position="874"/>
    </location>
</feature>
<feature type="sequence conflict" description="In Ref. 2; AAR29071." evidence="2" ref="2">
    <original>D</original>
    <variation>N</variation>
    <location>
        <position position="903"/>
    </location>
</feature>
<sequence length="979" mass="111271">MAEAFIQVVLDNLTSFLKGELVLLFGFQDEFQRLSSMFSTIQAVLEDAQEKQLNDKPLENWLQKLNAATYEVDDILDEYKTKATRFLQSEYGRYHPKVIPFRHKVGKRMDQVMKKLNAIAEERKKFHLQEKIIERQAATRETGSVLTEPQVYGRDKEKDEIVKILINTASDAQKLSVLPILGMGGLGKTTLSQMVFNDQRVTERFYPKIWICISDDFNEKRLIKAIVESIEGKSLSDMDLAPLQKKLQELLNGKRYFLVLDDVWNEDQHKWANLRAVLKVGASGAFVLTTTRLEKVGSIMGTLQPYELSNLSPEDCWFLFMQRAFGHQEEINPNLMAIGKEIVKKCGGVPLAAKTLGGILRFKREEREWEHVRDSPIWNLPQDESSILPALRLSYHHLPLDLRQCFVYCAVFPKDTKMAKENLIAFWMAHGFLLSKGNLELEDVGNEVWNELYLRSFFQEIEVESGKTYFKMHDLIHDLATSLFSANTSSSNIREINANYDGYMMSIGFAEVVSSYSPSLLQKFVSLRVLNLRNSNLNQLPSSIGDLVHLRYLDLSGNFRIRNLPKRLCKLQNLQTLDLHYCDSLSCLPKQTSKLGSLRNLLLDGCSLTSTPPRIGLLTCLKSLSCFVIGKRKGHQLGELKNLNLYGSISITKLDRVKKDTDAKEANLSAKANLHSLCLSWDLDGKHRYDSEVLEALKPHSNLKYLEINGFGGIRLPDWMNQSVLKNVVSIRIRGCENCSCLPPFGELPCLESLELHTGSADVEYVEDNVHPGRFPSLRKLVIWDFSNLKGLLKMEGEKQFPVLEEMTFYWCPMFVIPTLSSVKTLKVIVTDATVLRSISNLRALTSLDISDNVEATSLPEEMFKSLANLKYLKISFFRNLKELPTSLASLNALKSLKFEFCDALESLPEEGVKGLTSLTELSVSNCMMLKCLPEGLQHLTALTTLTITQCPIVFKRCERGIGEDWHKIAHIPYLTLYE</sequence>
<accession>Q7XA42</accession>
<accession>Q7XA21</accession>
<protein>
    <recommendedName>
        <fullName>Putative disease resistance protein RGA1</fullName>
    </recommendedName>
    <alternativeName>
        <fullName>RGA3-blb</fullName>
    </alternativeName>
</protein>
<dbReference type="EMBL" id="AY303170">
    <property type="protein sequence ID" value="AAP45163.2"/>
    <property type="molecule type" value="Genomic_DNA"/>
</dbReference>
<dbReference type="EMBL" id="AY303171">
    <property type="protein sequence ID" value="AAP45185.2"/>
    <property type="status" value="ALT_SEQ"/>
    <property type="molecule type" value="Genomic_DNA"/>
</dbReference>
<dbReference type="EMBL" id="AY426261">
    <property type="protein sequence ID" value="AAR29071.1"/>
    <property type="molecule type" value="Genomic_DNA"/>
</dbReference>
<dbReference type="SMR" id="Q7XA42"/>
<dbReference type="GO" id="GO:0043531">
    <property type="term" value="F:ADP binding"/>
    <property type="evidence" value="ECO:0007669"/>
    <property type="project" value="InterPro"/>
</dbReference>
<dbReference type="GO" id="GO:0005524">
    <property type="term" value="F:ATP binding"/>
    <property type="evidence" value="ECO:0007669"/>
    <property type="project" value="UniProtKB-KW"/>
</dbReference>
<dbReference type="GO" id="GO:0098542">
    <property type="term" value="P:defense response to other organism"/>
    <property type="evidence" value="ECO:0007669"/>
    <property type="project" value="UniProtKB-ARBA"/>
</dbReference>
<dbReference type="CDD" id="cd14798">
    <property type="entry name" value="RX-CC_like"/>
    <property type="match status" value="1"/>
</dbReference>
<dbReference type="FunFam" id="3.40.50.300:FF:001091">
    <property type="entry name" value="Probable disease resistance protein At1g61300"/>
    <property type="match status" value="1"/>
</dbReference>
<dbReference type="FunFam" id="1.10.10.10:FF:000322">
    <property type="entry name" value="Probable disease resistance protein At1g63360"/>
    <property type="match status" value="1"/>
</dbReference>
<dbReference type="Gene3D" id="1.20.5.4130">
    <property type="match status" value="1"/>
</dbReference>
<dbReference type="Gene3D" id="1.10.8.430">
    <property type="entry name" value="Helical domain of apoptotic protease-activating factors"/>
    <property type="match status" value="1"/>
</dbReference>
<dbReference type="Gene3D" id="3.40.50.300">
    <property type="entry name" value="P-loop containing nucleotide triphosphate hydrolases"/>
    <property type="match status" value="1"/>
</dbReference>
<dbReference type="Gene3D" id="3.80.10.10">
    <property type="entry name" value="Ribonuclease Inhibitor"/>
    <property type="match status" value="2"/>
</dbReference>
<dbReference type="Gene3D" id="1.10.10.10">
    <property type="entry name" value="Winged helix-like DNA-binding domain superfamily/Winged helix DNA-binding domain"/>
    <property type="match status" value="1"/>
</dbReference>
<dbReference type="InterPro" id="IPR042197">
    <property type="entry name" value="Apaf_helical"/>
</dbReference>
<dbReference type="InterPro" id="IPR001611">
    <property type="entry name" value="Leu-rich_rpt"/>
</dbReference>
<dbReference type="InterPro" id="IPR003591">
    <property type="entry name" value="Leu-rich_rpt_typical-subtyp"/>
</dbReference>
<dbReference type="InterPro" id="IPR032675">
    <property type="entry name" value="LRR_dom_sf"/>
</dbReference>
<dbReference type="InterPro" id="IPR056789">
    <property type="entry name" value="LRR_R13L1-DRL21"/>
</dbReference>
<dbReference type="InterPro" id="IPR055414">
    <property type="entry name" value="LRR_R13L4/SHOC2-like"/>
</dbReference>
<dbReference type="InterPro" id="IPR002182">
    <property type="entry name" value="NB-ARC"/>
</dbReference>
<dbReference type="InterPro" id="IPR027417">
    <property type="entry name" value="P-loop_NTPase"/>
</dbReference>
<dbReference type="InterPro" id="IPR038005">
    <property type="entry name" value="RX-like_CC"/>
</dbReference>
<dbReference type="InterPro" id="IPR041118">
    <property type="entry name" value="Rx_N"/>
</dbReference>
<dbReference type="InterPro" id="IPR036388">
    <property type="entry name" value="WH-like_DNA-bd_sf"/>
</dbReference>
<dbReference type="PANTHER" id="PTHR36766:SF42">
    <property type="entry name" value="NB-ARC DOMAIN DISEASE RESISTANCE PROTEIN"/>
    <property type="match status" value="1"/>
</dbReference>
<dbReference type="PANTHER" id="PTHR36766">
    <property type="entry name" value="PLANT BROAD-SPECTRUM MILDEW RESISTANCE PROTEIN RPW8"/>
    <property type="match status" value="1"/>
</dbReference>
<dbReference type="Pfam" id="PF23598">
    <property type="entry name" value="LRR_14"/>
    <property type="match status" value="1"/>
</dbReference>
<dbReference type="Pfam" id="PF25019">
    <property type="entry name" value="LRR_R13L1-DRL21"/>
    <property type="match status" value="1"/>
</dbReference>
<dbReference type="Pfam" id="PF00931">
    <property type="entry name" value="NB-ARC"/>
    <property type="match status" value="1"/>
</dbReference>
<dbReference type="Pfam" id="PF18052">
    <property type="entry name" value="Rx_N"/>
    <property type="match status" value="1"/>
</dbReference>
<dbReference type="Pfam" id="PF23559">
    <property type="entry name" value="WH_DRP"/>
    <property type="match status" value="1"/>
</dbReference>
<dbReference type="PRINTS" id="PR00364">
    <property type="entry name" value="DISEASERSIST"/>
</dbReference>
<dbReference type="SMART" id="SM00369">
    <property type="entry name" value="LRR_TYP"/>
    <property type="match status" value="5"/>
</dbReference>
<dbReference type="SUPFAM" id="SSF52058">
    <property type="entry name" value="L domain-like"/>
    <property type="match status" value="2"/>
</dbReference>
<dbReference type="SUPFAM" id="SSF52540">
    <property type="entry name" value="P-loop containing nucleoside triphosphate hydrolases"/>
    <property type="match status" value="1"/>
</dbReference>
<dbReference type="PROSITE" id="PS51450">
    <property type="entry name" value="LRR"/>
    <property type="match status" value="5"/>
</dbReference>
<name>RGA1_SOLBU</name>
<organism>
    <name type="scientific">Solanum bulbocastanum</name>
    <name type="common">Wild potato</name>
    <dbReference type="NCBI Taxonomy" id="147425"/>
    <lineage>
        <taxon>Eukaryota</taxon>
        <taxon>Viridiplantae</taxon>
        <taxon>Streptophyta</taxon>
        <taxon>Embryophyta</taxon>
        <taxon>Tracheophyta</taxon>
        <taxon>Spermatophyta</taxon>
        <taxon>Magnoliopsida</taxon>
        <taxon>eudicotyledons</taxon>
        <taxon>Gunneridae</taxon>
        <taxon>Pentapetalae</taxon>
        <taxon>asterids</taxon>
        <taxon>lamiids</taxon>
        <taxon>Solanales</taxon>
        <taxon>Solanaceae</taxon>
        <taxon>Solanoideae</taxon>
        <taxon>Solaneae</taxon>
        <taxon>Solanum</taxon>
    </lineage>
</organism>
<keyword id="KW-0067">ATP-binding</keyword>
<keyword id="KW-0433">Leucine-rich repeat</keyword>
<keyword id="KW-0547">Nucleotide-binding</keyword>
<keyword id="KW-0611">Plant defense</keyword>
<keyword id="KW-0677">Repeat</keyword>
<gene>
    <name type="primary">RGA1</name>
    <name type="synonym">177O13.37</name>
    <name type="synonym">CB3A14.4</name>
</gene>
<proteinExistence type="evidence at transcript level"/>